<evidence type="ECO:0000255" key="1">
    <source>
        <dbReference type="HAMAP-Rule" id="MF_01117"/>
    </source>
</evidence>
<keyword id="KW-1003">Cell membrane</keyword>
<keyword id="KW-0444">Lipid biosynthesis</keyword>
<keyword id="KW-0443">Lipid metabolism</keyword>
<keyword id="KW-0460">Magnesium</keyword>
<keyword id="KW-0472">Membrane</keyword>
<keyword id="KW-0594">Phospholipid biosynthesis</keyword>
<keyword id="KW-1208">Phospholipid metabolism</keyword>
<keyword id="KW-1185">Reference proteome</keyword>
<keyword id="KW-0808">Transferase</keyword>
<keyword id="KW-0812">Transmembrane</keyword>
<keyword id="KW-1133">Transmembrane helix</keyword>
<dbReference type="EC" id="2.7.7.67" evidence="1"/>
<dbReference type="EMBL" id="AE009439">
    <property type="protein sequence ID" value="AAM02286.1"/>
    <property type="molecule type" value="Genomic_DNA"/>
</dbReference>
<dbReference type="SMR" id="Q8TWG2"/>
<dbReference type="FunCoup" id="Q8TWG2">
    <property type="interactions" value="1"/>
</dbReference>
<dbReference type="STRING" id="190192.MK1073"/>
<dbReference type="PaxDb" id="190192-MK1073"/>
<dbReference type="EnsemblBacteria" id="AAM02286">
    <property type="protein sequence ID" value="AAM02286"/>
    <property type="gene ID" value="MK1073"/>
</dbReference>
<dbReference type="KEGG" id="mka:MK1073"/>
<dbReference type="HOGENOM" id="CLU_105710_0_0_2"/>
<dbReference type="InParanoid" id="Q8TWG2"/>
<dbReference type="UniPathway" id="UPA00940"/>
<dbReference type="Proteomes" id="UP000001826">
    <property type="component" value="Chromosome"/>
</dbReference>
<dbReference type="GO" id="GO:0005886">
    <property type="term" value="C:plasma membrane"/>
    <property type="evidence" value="ECO:0007669"/>
    <property type="project" value="UniProtKB-SubCell"/>
</dbReference>
<dbReference type="GO" id="GO:0043338">
    <property type="term" value="F:CDP-2,3-bis-(O-geranylgeranyl)-sn-glycerol synthase activity"/>
    <property type="evidence" value="ECO:0007669"/>
    <property type="project" value="UniProtKB-EC"/>
</dbReference>
<dbReference type="GO" id="GO:0046474">
    <property type="term" value="P:glycerophospholipid biosynthetic process"/>
    <property type="evidence" value="ECO:0007669"/>
    <property type="project" value="UniProtKB-UniRule"/>
</dbReference>
<dbReference type="HAMAP" id="MF_01117">
    <property type="entry name" value="CDP_archaeol_synth"/>
    <property type="match status" value="1"/>
</dbReference>
<dbReference type="InterPro" id="IPR032690">
    <property type="entry name" value="CarS"/>
</dbReference>
<dbReference type="InterPro" id="IPR002726">
    <property type="entry name" value="CarS_archaea"/>
</dbReference>
<dbReference type="NCBIfam" id="NF003114">
    <property type="entry name" value="PRK04032.1"/>
    <property type="match status" value="1"/>
</dbReference>
<dbReference type="PANTHER" id="PTHR39650">
    <property type="entry name" value="CDP-ARCHAEOL SYNTHASE"/>
    <property type="match status" value="1"/>
</dbReference>
<dbReference type="PANTHER" id="PTHR39650:SF1">
    <property type="entry name" value="CDP-ARCHAEOL SYNTHASE"/>
    <property type="match status" value="1"/>
</dbReference>
<dbReference type="Pfam" id="PF01864">
    <property type="entry name" value="CarS-like"/>
    <property type="match status" value="1"/>
</dbReference>
<comment type="function">
    <text evidence="1">Catalyzes the formation of CDP-2,3-bis-(O-geranylgeranyl)-sn-glycerol (CDP-archaeol) from 2,3-bis-(O-geranylgeranyl)-sn-glycerol 1-phosphate (DGGGP) and CTP. This reaction is the third ether-bond-formation step in the biosynthesis of archaeal membrane lipids.</text>
</comment>
<comment type="catalytic activity">
    <reaction evidence="1">
        <text>2,3-bis-O-(geranylgeranyl)-sn-glycerol 1-phosphate + CTP + H(+) = CDP-2,3-bis-O-(geranylgeranyl)-sn-glycerol + diphosphate</text>
        <dbReference type="Rhea" id="RHEA:25690"/>
        <dbReference type="ChEBI" id="CHEBI:15378"/>
        <dbReference type="ChEBI" id="CHEBI:33019"/>
        <dbReference type="ChEBI" id="CHEBI:37563"/>
        <dbReference type="ChEBI" id="CHEBI:58837"/>
        <dbReference type="ChEBI" id="CHEBI:58838"/>
        <dbReference type="EC" id="2.7.7.67"/>
    </reaction>
</comment>
<comment type="cofactor">
    <cofactor evidence="1">
        <name>Mg(2+)</name>
        <dbReference type="ChEBI" id="CHEBI:18420"/>
    </cofactor>
</comment>
<comment type="pathway">
    <text evidence="1">Membrane lipid metabolism; glycerophospholipid metabolism.</text>
</comment>
<comment type="subcellular location">
    <subcellularLocation>
        <location evidence="1">Cell membrane</location>
        <topology evidence="1">Multi-pass membrane protein</topology>
    </subcellularLocation>
</comment>
<comment type="similarity">
    <text evidence="1">Belongs to the CDP-archaeol synthase family.</text>
</comment>
<sequence length="173" mass="18347">MVEMGSGAWLELGKGLWFILPAYIANLSACLFGGGRPLDFGKKLSDGRRLLGDGVTIRGFIVGVLAGAVVGLGEGLVVGDPWKAGDGFILGLGAMAGDAVGSFVKRRIGLERGAPAPVLDQLDFFVGAVLLYYLVYGWHPPGWVLVGLAILTLALHWLTNVIGYLLKLKEVPW</sequence>
<proteinExistence type="inferred from homology"/>
<gene>
    <name evidence="1" type="primary">carS</name>
    <name type="ordered locus">MK1073</name>
</gene>
<name>CDPAS_METKA</name>
<reference key="1">
    <citation type="journal article" date="2002" name="Proc. Natl. Acad. Sci. U.S.A.">
        <title>The complete genome of hyperthermophile Methanopyrus kandleri AV19 and monophyly of archaeal methanogens.</title>
        <authorList>
            <person name="Slesarev A.I."/>
            <person name="Mezhevaya K.V."/>
            <person name="Makarova K.S."/>
            <person name="Polushin N.N."/>
            <person name="Shcherbinina O.V."/>
            <person name="Shakhova V.V."/>
            <person name="Belova G.I."/>
            <person name="Aravind L."/>
            <person name="Natale D.A."/>
            <person name="Rogozin I.B."/>
            <person name="Tatusov R.L."/>
            <person name="Wolf Y.I."/>
            <person name="Stetter K.O."/>
            <person name="Malykh A.G."/>
            <person name="Koonin E.V."/>
            <person name="Kozyavkin S.A."/>
        </authorList>
    </citation>
    <scope>NUCLEOTIDE SEQUENCE [LARGE SCALE GENOMIC DNA]</scope>
    <source>
        <strain>AV19 / DSM 6324 / JCM 9639 / NBRC 100938</strain>
    </source>
</reference>
<organism>
    <name type="scientific">Methanopyrus kandleri (strain AV19 / DSM 6324 / JCM 9639 / NBRC 100938)</name>
    <dbReference type="NCBI Taxonomy" id="190192"/>
    <lineage>
        <taxon>Archaea</taxon>
        <taxon>Methanobacteriati</taxon>
        <taxon>Methanobacteriota</taxon>
        <taxon>Methanomada group</taxon>
        <taxon>Methanopyri</taxon>
        <taxon>Methanopyrales</taxon>
        <taxon>Methanopyraceae</taxon>
        <taxon>Methanopyrus</taxon>
    </lineage>
</organism>
<feature type="chain" id="PRO_0000094171" description="CDP-archaeol synthase">
    <location>
        <begin position="1"/>
        <end position="173"/>
    </location>
</feature>
<feature type="transmembrane region" description="Helical" evidence="1">
    <location>
        <begin position="15"/>
        <end position="35"/>
    </location>
</feature>
<feature type="transmembrane region" description="Helical" evidence="1">
    <location>
        <begin position="59"/>
        <end position="79"/>
    </location>
</feature>
<feature type="transmembrane region" description="Helical" evidence="1">
    <location>
        <begin position="84"/>
        <end position="104"/>
    </location>
</feature>
<feature type="transmembrane region" description="Helical" evidence="1">
    <location>
        <begin position="118"/>
        <end position="138"/>
    </location>
</feature>
<feature type="transmembrane region" description="Helical" evidence="1">
    <location>
        <begin position="142"/>
        <end position="162"/>
    </location>
</feature>
<protein>
    <recommendedName>
        <fullName evidence="1">CDP-archaeol synthase</fullName>
        <ecNumber evidence="1">2.7.7.67</ecNumber>
    </recommendedName>
    <alternativeName>
        <fullName evidence="1">CDP-2,3-bis-(O-geranylgeranyl)-sn-glycerol synthase</fullName>
    </alternativeName>
</protein>
<accession>Q8TWG2</accession>